<proteinExistence type="inferred from homology"/>
<organism>
    <name type="scientific">Streptococcus pyogenes serotype M1</name>
    <dbReference type="NCBI Taxonomy" id="301447"/>
    <lineage>
        <taxon>Bacteria</taxon>
        <taxon>Bacillati</taxon>
        <taxon>Bacillota</taxon>
        <taxon>Bacilli</taxon>
        <taxon>Lactobacillales</taxon>
        <taxon>Streptococcaceae</taxon>
        <taxon>Streptococcus</taxon>
    </lineage>
</organism>
<name>LDHD_STRP1</name>
<reference key="1">
    <citation type="journal article" date="2001" name="Proc. Natl. Acad. Sci. U.S.A.">
        <title>Complete genome sequence of an M1 strain of Streptococcus pyogenes.</title>
        <authorList>
            <person name="Ferretti J.J."/>
            <person name="McShan W.M."/>
            <person name="Ajdic D.J."/>
            <person name="Savic D.J."/>
            <person name="Savic G."/>
            <person name="Lyon K."/>
            <person name="Primeaux C."/>
            <person name="Sezate S."/>
            <person name="Suvorov A.N."/>
            <person name="Kenton S."/>
            <person name="Lai H.S."/>
            <person name="Lin S.P."/>
            <person name="Qian Y."/>
            <person name="Jia H.G."/>
            <person name="Najar F.Z."/>
            <person name="Ren Q."/>
            <person name="Zhu H."/>
            <person name="Song L."/>
            <person name="White J."/>
            <person name="Yuan X."/>
            <person name="Clifton S.W."/>
            <person name="Roe B.A."/>
            <person name="McLaughlin R.E."/>
        </authorList>
    </citation>
    <scope>NUCLEOTIDE SEQUENCE [LARGE SCALE GENOMIC DNA]</scope>
    <source>
        <strain>ATCC 700294 / SF370 / Serotype M1</strain>
    </source>
</reference>
<reference key="2">
    <citation type="journal article" date="2005" name="J. Infect. Dis.">
        <title>Evolutionary origin and emergence of a highly successful clone of serotype M1 group A Streptococcus involved multiple horizontal gene transfer events.</title>
        <authorList>
            <person name="Sumby P."/>
            <person name="Porcella S.F."/>
            <person name="Madrigal A.G."/>
            <person name="Barbian K.D."/>
            <person name="Virtaneva K."/>
            <person name="Ricklefs S.M."/>
            <person name="Sturdevant D.E."/>
            <person name="Graham M.R."/>
            <person name="Vuopio-Varkila J."/>
            <person name="Hoe N.P."/>
            <person name="Musser J.M."/>
        </authorList>
    </citation>
    <scope>NUCLEOTIDE SEQUENCE [LARGE SCALE GENOMIC DNA]</scope>
    <source>
        <strain>ATCC BAA-947 / MGAS5005 / Serotype M1</strain>
    </source>
</reference>
<evidence type="ECO:0000250" key="1">
    <source>
        <dbReference type="UniProtKB" id="P26297"/>
    </source>
</evidence>
<evidence type="ECO:0000250" key="2">
    <source>
        <dbReference type="UniProtKB" id="P30901"/>
    </source>
</evidence>
<evidence type="ECO:0000305" key="3"/>
<comment type="catalytic activity">
    <reaction>
        <text>(R)-lactate + NAD(+) = pyruvate + NADH + H(+)</text>
        <dbReference type="Rhea" id="RHEA:16369"/>
        <dbReference type="ChEBI" id="CHEBI:15361"/>
        <dbReference type="ChEBI" id="CHEBI:15378"/>
        <dbReference type="ChEBI" id="CHEBI:16004"/>
        <dbReference type="ChEBI" id="CHEBI:57540"/>
        <dbReference type="ChEBI" id="CHEBI:57945"/>
        <dbReference type="EC" id="1.1.1.28"/>
    </reaction>
</comment>
<comment type="similarity">
    <text evidence="3">Belongs to the D-isomer specific 2-hydroxyacid dehydrogenase family.</text>
</comment>
<sequence>MKLKLYNVRGEEAVLAKKWADDNGIEISLTESPLTPETVKEAEGFDGIANAQIGPLDDAIYPLLKEMGIKQIAQHSASVDMYNLDLATENDIIITNVPSYSPESIAEFTVTIVLNLIRHVELIRENVKKQNFTWGLPIRGRVLGDMTVAIIGTGRIGLATAKIFKGFGCKVVGYDIYQSDAAKAVLDYKESVEEAIKDADLVSLHMPPTAENTHLFNSDLFKSFKKGAILMNMARGAVIETQDLLDALDAGLLSGAGIDTYEFEGPYIPKNFEGQEITDSLFKALINHPKVIYTPHAAYYTDEAVKNLVEGALNATVEIIKTGTTTTRVN</sequence>
<gene>
    <name type="primary">ldhD</name>
    <name type="synonym">ddh</name>
    <name type="ordered locus">SPy_1170</name>
    <name type="ordered locus">M5005_Spy0890</name>
</gene>
<dbReference type="EC" id="1.1.1.28"/>
<dbReference type="EMBL" id="AE004092">
    <property type="protein sequence ID" value="AAK34037.1"/>
    <property type="molecule type" value="Genomic_DNA"/>
</dbReference>
<dbReference type="EMBL" id="CP000017">
    <property type="protein sequence ID" value="AAZ51508.1"/>
    <property type="molecule type" value="Genomic_DNA"/>
</dbReference>
<dbReference type="RefSeq" id="NP_269316.1">
    <property type="nucleotide sequence ID" value="NC_002737.2"/>
</dbReference>
<dbReference type="SMR" id="Q99ZM2"/>
<dbReference type="PaxDb" id="1314-HKU360_00950"/>
<dbReference type="KEGG" id="spy:SPy_1170"/>
<dbReference type="KEGG" id="spz:M5005_Spy0890"/>
<dbReference type="PATRIC" id="fig|160490.10.peg.1021"/>
<dbReference type="HOGENOM" id="CLU_019796_1_1_9"/>
<dbReference type="OMA" id="IAFYTNT"/>
<dbReference type="Proteomes" id="UP000000750">
    <property type="component" value="Chromosome"/>
</dbReference>
<dbReference type="GO" id="GO:0008720">
    <property type="term" value="F:D-lactate dehydrogenase activity"/>
    <property type="evidence" value="ECO:0007669"/>
    <property type="project" value="UniProtKB-EC"/>
</dbReference>
<dbReference type="GO" id="GO:0051287">
    <property type="term" value="F:NAD binding"/>
    <property type="evidence" value="ECO:0007669"/>
    <property type="project" value="InterPro"/>
</dbReference>
<dbReference type="CDD" id="cd12186">
    <property type="entry name" value="LDH"/>
    <property type="match status" value="1"/>
</dbReference>
<dbReference type="Gene3D" id="3.40.50.720">
    <property type="entry name" value="NAD(P)-binding Rossmann-like Domain"/>
    <property type="match status" value="2"/>
</dbReference>
<dbReference type="InterPro" id="IPR006139">
    <property type="entry name" value="D-isomer_2_OHA_DH_cat_dom"/>
</dbReference>
<dbReference type="InterPro" id="IPR029753">
    <property type="entry name" value="D-isomer_DH_CS"/>
</dbReference>
<dbReference type="InterPro" id="IPR029752">
    <property type="entry name" value="D-isomer_DH_CS1"/>
</dbReference>
<dbReference type="InterPro" id="IPR006140">
    <property type="entry name" value="D-isomer_DH_NAD-bd"/>
</dbReference>
<dbReference type="InterPro" id="IPR036291">
    <property type="entry name" value="NAD(P)-bd_dom_sf"/>
</dbReference>
<dbReference type="NCBIfam" id="NF006374">
    <property type="entry name" value="PRK08605.1"/>
    <property type="match status" value="1"/>
</dbReference>
<dbReference type="PANTHER" id="PTHR43026">
    <property type="entry name" value="2-HYDROXYACID DEHYDROGENASE HOMOLOG 1-RELATED"/>
    <property type="match status" value="1"/>
</dbReference>
<dbReference type="PANTHER" id="PTHR43026:SF1">
    <property type="entry name" value="2-HYDROXYACID DEHYDROGENASE HOMOLOG 1-RELATED"/>
    <property type="match status" value="1"/>
</dbReference>
<dbReference type="Pfam" id="PF00389">
    <property type="entry name" value="2-Hacid_dh"/>
    <property type="match status" value="1"/>
</dbReference>
<dbReference type="Pfam" id="PF02826">
    <property type="entry name" value="2-Hacid_dh_C"/>
    <property type="match status" value="1"/>
</dbReference>
<dbReference type="SUPFAM" id="SSF52283">
    <property type="entry name" value="Formate/glycerate dehydrogenase catalytic domain-like"/>
    <property type="match status" value="1"/>
</dbReference>
<dbReference type="SUPFAM" id="SSF51735">
    <property type="entry name" value="NAD(P)-binding Rossmann-fold domains"/>
    <property type="match status" value="1"/>
</dbReference>
<dbReference type="PROSITE" id="PS00065">
    <property type="entry name" value="D_2_HYDROXYACID_DH_1"/>
    <property type="match status" value="1"/>
</dbReference>
<dbReference type="PROSITE" id="PS00671">
    <property type="entry name" value="D_2_HYDROXYACID_DH_3"/>
    <property type="match status" value="1"/>
</dbReference>
<feature type="chain" id="PRO_0000075970" description="D-lactate dehydrogenase">
    <location>
        <begin position="1"/>
        <end position="330"/>
    </location>
</feature>
<feature type="active site" evidence="1">
    <location>
        <position position="235"/>
    </location>
</feature>
<feature type="active site" evidence="1">
    <location>
        <position position="264"/>
    </location>
</feature>
<feature type="active site" description="Proton donor" evidence="1">
    <location>
        <position position="296"/>
    </location>
</feature>
<feature type="binding site" evidence="2">
    <location>
        <begin position="155"/>
        <end position="156"/>
    </location>
    <ligand>
        <name>NAD(+)</name>
        <dbReference type="ChEBI" id="CHEBI:57540"/>
    </ligand>
</feature>
<feature type="binding site" evidence="1">
    <location>
        <position position="175"/>
    </location>
    <ligand>
        <name>NAD(+)</name>
        <dbReference type="ChEBI" id="CHEBI:57540"/>
    </ligand>
</feature>
<feature type="binding site" evidence="2">
    <location>
        <begin position="206"/>
        <end position="207"/>
    </location>
    <ligand>
        <name>NAD(+)</name>
        <dbReference type="ChEBI" id="CHEBI:57540"/>
    </ligand>
</feature>
<feature type="binding site" evidence="2">
    <location>
        <position position="212"/>
    </location>
    <ligand>
        <name>NAD(+)</name>
        <dbReference type="ChEBI" id="CHEBI:57540"/>
    </ligand>
</feature>
<feature type="binding site" evidence="2">
    <location>
        <begin position="233"/>
        <end position="235"/>
    </location>
    <ligand>
        <name>NAD(+)</name>
        <dbReference type="ChEBI" id="CHEBI:57540"/>
    </ligand>
</feature>
<feature type="binding site" evidence="2">
    <location>
        <position position="259"/>
    </location>
    <ligand>
        <name>NAD(+)</name>
        <dbReference type="ChEBI" id="CHEBI:57540"/>
    </ligand>
</feature>
<protein>
    <recommendedName>
        <fullName>D-lactate dehydrogenase</fullName>
        <shortName>D-LDH</shortName>
        <ecNumber>1.1.1.28</ecNumber>
    </recommendedName>
    <alternativeName>
        <fullName>D-specific 2-hydroxyacid dehydrogenase</fullName>
    </alternativeName>
</protein>
<accession>Q99ZM2</accession>
<accession>Q48YR4</accession>
<keyword id="KW-0520">NAD</keyword>
<keyword id="KW-0560">Oxidoreductase</keyword>
<keyword id="KW-1185">Reference proteome</keyword>